<sequence length="136" mass="15274">MLQPKRTKFRKMHKGRNRGLAQGTDVSFGEFGLKACGRCRLTARQIEAARRAMTRAIKRQGKVWIRVFPDKPITEKPLEVRMGKGKGNVEYWVALIQPGKVLFEMAGVPEETAREAFKLAAAKLPVGTTFVTKTVM</sequence>
<proteinExistence type="inferred from homology"/>
<comment type="function">
    <text evidence="1">Binds 23S rRNA and is also seen to make contacts with the A and possibly P site tRNAs.</text>
</comment>
<comment type="subunit">
    <text evidence="1">Part of the 50S ribosomal subunit.</text>
</comment>
<comment type="similarity">
    <text evidence="1">Belongs to the universal ribosomal protein uL16 family.</text>
</comment>
<dbReference type="EMBL" id="CP000901">
    <property type="protein sequence ID" value="ABX86155.1"/>
    <property type="molecule type" value="Genomic_DNA"/>
</dbReference>
<dbReference type="RefSeq" id="WP_002218940.1">
    <property type="nucleotide sequence ID" value="NZ_CP009935.1"/>
</dbReference>
<dbReference type="SMR" id="A9R903"/>
<dbReference type="GeneID" id="97454238"/>
<dbReference type="KEGG" id="ypg:YpAngola_A0591"/>
<dbReference type="PATRIC" id="fig|349746.12.peg.1540"/>
<dbReference type="GO" id="GO:0022625">
    <property type="term" value="C:cytosolic large ribosomal subunit"/>
    <property type="evidence" value="ECO:0007669"/>
    <property type="project" value="TreeGrafter"/>
</dbReference>
<dbReference type="GO" id="GO:0019843">
    <property type="term" value="F:rRNA binding"/>
    <property type="evidence" value="ECO:0007669"/>
    <property type="project" value="UniProtKB-UniRule"/>
</dbReference>
<dbReference type="GO" id="GO:0003735">
    <property type="term" value="F:structural constituent of ribosome"/>
    <property type="evidence" value="ECO:0007669"/>
    <property type="project" value="InterPro"/>
</dbReference>
<dbReference type="GO" id="GO:0000049">
    <property type="term" value="F:tRNA binding"/>
    <property type="evidence" value="ECO:0007669"/>
    <property type="project" value="UniProtKB-KW"/>
</dbReference>
<dbReference type="GO" id="GO:0006412">
    <property type="term" value="P:translation"/>
    <property type="evidence" value="ECO:0007669"/>
    <property type="project" value="UniProtKB-UniRule"/>
</dbReference>
<dbReference type="CDD" id="cd01433">
    <property type="entry name" value="Ribosomal_L16_L10e"/>
    <property type="match status" value="1"/>
</dbReference>
<dbReference type="FunFam" id="3.90.1170.10:FF:000001">
    <property type="entry name" value="50S ribosomal protein L16"/>
    <property type="match status" value="1"/>
</dbReference>
<dbReference type="Gene3D" id="3.90.1170.10">
    <property type="entry name" value="Ribosomal protein L10e/L16"/>
    <property type="match status" value="1"/>
</dbReference>
<dbReference type="HAMAP" id="MF_01342">
    <property type="entry name" value="Ribosomal_uL16"/>
    <property type="match status" value="1"/>
</dbReference>
<dbReference type="InterPro" id="IPR047873">
    <property type="entry name" value="Ribosomal_uL16"/>
</dbReference>
<dbReference type="InterPro" id="IPR000114">
    <property type="entry name" value="Ribosomal_uL16_bact-type"/>
</dbReference>
<dbReference type="InterPro" id="IPR020798">
    <property type="entry name" value="Ribosomal_uL16_CS"/>
</dbReference>
<dbReference type="InterPro" id="IPR016180">
    <property type="entry name" value="Ribosomal_uL16_dom"/>
</dbReference>
<dbReference type="InterPro" id="IPR036920">
    <property type="entry name" value="Ribosomal_uL16_sf"/>
</dbReference>
<dbReference type="NCBIfam" id="TIGR01164">
    <property type="entry name" value="rplP_bact"/>
    <property type="match status" value="1"/>
</dbReference>
<dbReference type="PANTHER" id="PTHR12220">
    <property type="entry name" value="50S/60S RIBOSOMAL PROTEIN L16"/>
    <property type="match status" value="1"/>
</dbReference>
<dbReference type="PANTHER" id="PTHR12220:SF13">
    <property type="entry name" value="LARGE RIBOSOMAL SUBUNIT PROTEIN UL16M"/>
    <property type="match status" value="1"/>
</dbReference>
<dbReference type="Pfam" id="PF00252">
    <property type="entry name" value="Ribosomal_L16"/>
    <property type="match status" value="1"/>
</dbReference>
<dbReference type="PRINTS" id="PR00060">
    <property type="entry name" value="RIBOSOMALL16"/>
</dbReference>
<dbReference type="SUPFAM" id="SSF54686">
    <property type="entry name" value="Ribosomal protein L16p/L10e"/>
    <property type="match status" value="1"/>
</dbReference>
<dbReference type="PROSITE" id="PS00586">
    <property type="entry name" value="RIBOSOMAL_L16_1"/>
    <property type="match status" value="1"/>
</dbReference>
<dbReference type="PROSITE" id="PS00701">
    <property type="entry name" value="RIBOSOMAL_L16_2"/>
    <property type="match status" value="1"/>
</dbReference>
<name>RL16_YERPG</name>
<protein>
    <recommendedName>
        <fullName evidence="1">Large ribosomal subunit protein uL16</fullName>
    </recommendedName>
    <alternativeName>
        <fullName evidence="2">50S ribosomal protein L16</fullName>
    </alternativeName>
</protein>
<feature type="chain" id="PRO_1000143056" description="Large ribosomal subunit protein uL16">
    <location>
        <begin position="1"/>
        <end position="136"/>
    </location>
</feature>
<evidence type="ECO:0000255" key="1">
    <source>
        <dbReference type="HAMAP-Rule" id="MF_01342"/>
    </source>
</evidence>
<evidence type="ECO:0000305" key="2"/>
<organism>
    <name type="scientific">Yersinia pestis bv. Antiqua (strain Angola)</name>
    <dbReference type="NCBI Taxonomy" id="349746"/>
    <lineage>
        <taxon>Bacteria</taxon>
        <taxon>Pseudomonadati</taxon>
        <taxon>Pseudomonadota</taxon>
        <taxon>Gammaproteobacteria</taxon>
        <taxon>Enterobacterales</taxon>
        <taxon>Yersiniaceae</taxon>
        <taxon>Yersinia</taxon>
    </lineage>
</organism>
<gene>
    <name evidence="1" type="primary">rplP</name>
    <name type="ordered locus">YpAngola_A0591</name>
</gene>
<reference key="1">
    <citation type="journal article" date="2010" name="J. Bacteriol.">
        <title>Genome sequence of the deep-rooted Yersinia pestis strain Angola reveals new insights into the evolution and pangenome of the plague bacterium.</title>
        <authorList>
            <person name="Eppinger M."/>
            <person name="Worsham P.L."/>
            <person name="Nikolich M.P."/>
            <person name="Riley D.R."/>
            <person name="Sebastian Y."/>
            <person name="Mou S."/>
            <person name="Achtman M."/>
            <person name="Lindler L.E."/>
            <person name="Ravel J."/>
        </authorList>
    </citation>
    <scope>NUCLEOTIDE SEQUENCE [LARGE SCALE GENOMIC DNA]</scope>
    <source>
        <strain>Angola</strain>
    </source>
</reference>
<keyword id="KW-0687">Ribonucleoprotein</keyword>
<keyword id="KW-0689">Ribosomal protein</keyword>
<keyword id="KW-0694">RNA-binding</keyword>
<keyword id="KW-0699">rRNA-binding</keyword>
<keyword id="KW-0820">tRNA-binding</keyword>
<accession>A9R903</accession>